<evidence type="ECO:0000250" key="1"/>
<evidence type="ECO:0000255" key="2">
    <source>
        <dbReference type="HAMAP-Rule" id="MF_00118"/>
    </source>
</evidence>
<name>EFTU1_PHOLL</name>
<proteinExistence type="inferred from homology"/>
<reference key="1">
    <citation type="journal article" date="2003" name="Nat. Biotechnol.">
        <title>The genome sequence of the entomopathogenic bacterium Photorhabdus luminescens.</title>
        <authorList>
            <person name="Duchaud E."/>
            <person name="Rusniok C."/>
            <person name="Frangeul L."/>
            <person name="Buchrieser C."/>
            <person name="Givaudan A."/>
            <person name="Taourit S."/>
            <person name="Bocs S."/>
            <person name="Boursaux-Eude C."/>
            <person name="Chandler M."/>
            <person name="Charles J.-F."/>
            <person name="Dassa E."/>
            <person name="Derose R."/>
            <person name="Derzelle S."/>
            <person name="Freyssinet G."/>
            <person name="Gaudriault S."/>
            <person name="Medigue C."/>
            <person name="Lanois A."/>
            <person name="Powell K."/>
            <person name="Siguier P."/>
            <person name="Vincent R."/>
            <person name="Wingate V."/>
            <person name="Zouine M."/>
            <person name="Glaser P."/>
            <person name="Boemare N."/>
            <person name="Danchin A."/>
            <person name="Kunst F."/>
        </authorList>
    </citation>
    <scope>NUCLEOTIDE SEQUENCE [LARGE SCALE GENOMIC DNA]</scope>
    <source>
        <strain>DSM 15139 / CIP 105565 / TT01</strain>
    </source>
</reference>
<protein>
    <recommendedName>
        <fullName evidence="2">Elongation factor Tu 1</fullName>
        <shortName evidence="2">EF-Tu 1</shortName>
        <ecNumber evidence="2">3.6.5.3</ecNumber>
    </recommendedName>
</protein>
<feature type="chain" id="PRO_0000337462" description="Elongation factor Tu 1">
    <location>
        <begin position="1"/>
        <end position="394"/>
    </location>
</feature>
<feature type="domain" description="tr-type G">
    <location>
        <begin position="10"/>
        <end position="204"/>
    </location>
</feature>
<feature type="region of interest" description="G1" evidence="1">
    <location>
        <begin position="19"/>
        <end position="26"/>
    </location>
</feature>
<feature type="region of interest" description="G2" evidence="1">
    <location>
        <begin position="60"/>
        <end position="64"/>
    </location>
</feature>
<feature type="region of interest" description="G3" evidence="1">
    <location>
        <begin position="81"/>
        <end position="84"/>
    </location>
</feature>
<feature type="region of interest" description="G4" evidence="1">
    <location>
        <begin position="136"/>
        <end position="139"/>
    </location>
</feature>
<feature type="region of interest" description="G5" evidence="1">
    <location>
        <begin position="174"/>
        <end position="176"/>
    </location>
</feature>
<feature type="binding site" evidence="2">
    <location>
        <begin position="19"/>
        <end position="26"/>
    </location>
    <ligand>
        <name>GTP</name>
        <dbReference type="ChEBI" id="CHEBI:37565"/>
    </ligand>
</feature>
<feature type="binding site" evidence="2">
    <location>
        <position position="26"/>
    </location>
    <ligand>
        <name>Mg(2+)</name>
        <dbReference type="ChEBI" id="CHEBI:18420"/>
    </ligand>
</feature>
<feature type="binding site" evidence="2">
    <location>
        <begin position="81"/>
        <end position="85"/>
    </location>
    <ligand>
        <name>GTP</name>
        <dbReference type="ChEBI" id="CHEBI:37565"/>
    </ligand>
</feature>
<feature type="binding site" evidence="2">
    <location>
        <begin position="136"/>
        <end position="139"/>
    </location>
    <ligand>
        <name>GTP</name>
        <dbReference type="ChEBI" id="CHEBI:37565"/>
    </ligand>
</feature>
<dbReference type="EC" id="3.6.5.3" evidence="2"/>
<dbReference type="EMBL" id="BX571860">
    <property type="protein sequence ID" value="CAE12727.1"/>
    <property type="molecule type" value="Genomic_DNA"/>
</dbReference>
<dbReference type="RefSeq" id="WP_011144818.1">
    <property type="nucleotide sequence ID" value="NC_005126.1"/>
</dbReference>
<dbReference type="SMR" id="Q7N9B1"/>
<dbReference type="STRING" id="243265.plu0432"/>
<dbReference type="GeneID" id="48846718"/>
<dbReference type="KEGG" id="plu:plu0432"/>
<dbReference type="eggNOG" id="COG0050">
    <property type="taxonomic scope" value="Bacteria"/>
</dbReference>
<dbReference type="HOGENOM" id="CLU_007265_0_2_6"/>
<dbReference type="OrthoDB" id="9803139at2"/>
<dbReference type="Proteomes" id="UP000002514">
    <property type="component" value="Chromosome"/>
</dbReference>
<dbReference type="GO" id="GO:0005829">
    <property type="term" value="C:cytosol"/>
    <property type="evidence" value="ECO:0007669"/>
    <property type="project" value="TreeGrafter"/>
</dbReference>
<dbReference type="GO" id="GO:0005525">
    <property type="term" value="F:GTP binding"/>
    <property type="evidence" value="ECO:0007669"/>
    <property type="project" value="UniProtKB-UniRule"/>
</dbReference>
<dbReference type="GO" id="GO:0003924">
    <property type="term" value="F:GTPase activity"/>
    <property type="evidence" value="ECO:0007669"/>
    <property type="project" value="InterPro"/>
</dbReference>
<dbReference type="GO" id="GO:0097216">
    <property type="term" value="F:guanosine tetraphosphate binding"/>
    <property type="evidence" value="ECO:0007669"/>
    <property type="project" value="UniProtKB-ARBA"/>
</dbReference>
<dbReference type="GO" id="GO:0003746">
    <property type="term" value="F:translation elongation factor activity"/>
    <property type="evidence" value="ECO:0007669"/>
    <property type="project" value="UniProtKB-UniRule"/>
</dbReference>
<dbReference type="CDD" id="cd01884">
    <property type="entry name" value="EF_Tu"/>
    <property type="match status" value="1"/>
</dbReference>
<dbReference type="CDD" id="cd03697">
    <property type="entry name" value="EFTU_II"/>
    <property type="match status" value="1"/>
</dbReference>
<dbReference type="CDD" id="cd03707">
    <property type="entry name" value="EFTU_III"/>
    <property type="match status" value="1"/>
</dbReference>
<dbReference type="FunFam" id="2.40.30.10:FF:000001">
    <property type="entry name" value="Elongation factor Tu"/>
    <property type="match status" value="1"/>
</dbReference>
<dbReference type="FunFam" id="3.40.50.300:FF:000003">
    <property type="entry name" value="Elongation factor Tu"/>
    <property type="match status" value="1"/>
</dbReference>
<dbReference type="Gene3D" id="3.40.50.300">
    <property type="entry name" value="P-loop containing nucleotide triphosphate hydrolases"/>
    <property type="match status" value="1"/>
</dbReference>
<dbReference type="Gene3D" id="2.40.30.10">
    <property type="entry name" value="Translation factors"/>
    <property type="match status" value="2"/>
</dbReference>
<dbReference type="HAMAP" id="MF_00118_B">
    <property type="entry name" value="EF_Tu_B"/>
    <property type="match status" value="1"/>
</dbReference>
<dbReference type="InterPro" id="IPR041709">
    <property type="entry name" value="EF-Tu_GTP-bd"/>
</dbReference>
<dbReference type="InterPro" id="IPR050055">
    <property type="entry name" value="EF-Tu_GTPase"/>
</dbReference>
<dbReference type="InterPro" id="IPR004161">
    <property type="entry name" value="EFTu-like_2"/>
</dbReference>
<dbReference type="InterPro" id="IPR033720">
    <property type="entry name" value="EFTU_2"/>
</dbReference>
<dbReference type="InterPro" id="IPR031157">
    <property type="entry name" value="G_TR_CS"/>
</dbReference>
<dbReference type="InterPro" id="IPR027417">
    <property type="entry name" value="P-loop_NTPase"/>
</dbReference>
<dbReference type="InterPro" id="IPR005225">
    <property type="entry name" value="Small_GTP-bd"/>
</dbReference>
<dbReference type="InterPro" id="IPR000795">
    <property type="entry name" value="T_Tr_GTP-bd_dom"/>
</dbReference>
<dbReference type="InterPro" id="IPR009000">
    <property type="entry name" value="Transl_B-barrel_sf"/>
</dbReference>
<dbReference type="InterPro" id="IPR009001">
    <property type="entry name" value="Transl_elong_EF1A/Init_IF2_C"/>
</dbReference>
<dbReference type="InterPro" id="IPR004541">
    <property type="entry name" value="Transl_elong_EFTu/EF1A_bac/org"/>
</dbReference>
<dbReference type="InterPro" id="IPR004160">
    <property type="entry name" value="Transl_elong_EFTu/EF1A_C"/>
</dbReference>
<dbReference type="NCBIfam" id="TIGR00485">
    <property type="entry name" value="EF-Tu"/>
    <property type="match status" value="1"/>
</dbReference>
<dbReference type="NCBIfam" id="NF000766">
    <property type="entry name" value="PRK00049.1"/>
    <property type="match status" value="1"/>
</dbReference>
<dbReference type="NCBIfam" id="NF009372">
    <property type="entry name" value="PRK12735.1"/>
    <property type="match status" value="1"/>
</dbReference>
<dbReference type="NCBIfam" id="NF009373">
    <property type="entry name" value="PRK12736.1"/>
    <property type="match status" value="1"/>
</dbReference>
<dbReference type="NCBIfam" id="TIGR00231">
    <property type="entry name" value="small_GTP"/>
    <property type="match status" value="1"/>
</dbReference>
<dbReference type="PANTHER" id="PTHR43721:SF22">
    <property type="entry name" value="ELONGATION FACTOR TU, MITOCHONDRIAL"/>
    <property type="match status" value="1"/>
</dbReference>
<dbReference type="PANTHER" id="PTHR43721">
    <property type="entry name" value="ELONGATION FACTOR TU-RELATED"/>
    <property type="match status" value="1"/>
</dbReference>
<dbReference type="Pfam" id="PF00009">
    <property type="entry name" value="GTP_EFTU"/>
    <property type="match status" value="1"/>
</dbReference>
<dbReference type="Pfam" id="PF03144">
    <property type="entry name" value="GTP_EFTU_D2"/>
    <property type="match status" value="1"/>
</dbReference>
<dbReference type="Pfam" id="PF03143">
    <property type="entry name" value="GTP_EFTU_D3"/>
    <property type="match status" value="1"/>
</dbReference>
<dbReference type="PRINTS" id="PR00315">
    <property type="entry name" value="ELONGATNFCT"/>
</dbReference>
<dbReference type="SUPFAM" id="SSF50465">
    <property type="entry name" value="EF-Tu/eEF-1alpha/eIF2-gamma C-terminal domain"/>
    <property type="match status" value="1"/>
</dbReference>
<dbReference type="SUPFAM" id="SSF52540">
    <property type="entry name" value="P-loop containing nucleoside triphosphate hydrolases"/>
    <property type="match status" value="1"/>
</dbReference>
<dbReference type="SUPFAM" id="SSF50447">
    <property type="entry name" value="Translation proteins"/>
    <property type="match status" value="1"/>
</dbReference>
<dbReference type="PROSITE" id="PS00301">
    <property type="entry name" value="G_TR_1"/>
    <property type="match status" value="1"/>
</dbReference>
<dbReference type="PROSITE" id="PS51722">
    <property type="entry name" value="G_TR_2"/>
    <property type="match status" value="1"/>
</dbReference>
<comment type="function">
    <text evidence="2">GTP hydrolase that promotes the GTP-dependent binding of aminoacyl-tRNA to the A-site of ribosomes during protein biosynthesis.</text>
</comment>
<comment type="catalytic activity">
    <reaction evidence="2">
        <text>GTP + H2O = GDP + phosphate + H(+)</text>
        <dbReference type="Rhea" id="RHEA:19669"/>
        <dbReference type="ChEBI" id="CHEBI:15377"/>
        <dbReference type="ChEBI" id="CHEBI:15378"/>
        <dbReference type="ChEBI" id="CHEBI:37565"/>
        <dbReference type="ChEBI" id="CHEBI:43474"/>
        <dbReference type="ChEBI" id="CHEBI:58189"/>
        <dbReference type="EC" id="3.6.5.3"/>
    </reaction>
    <physiologicalReaction direction="left-to-right" evidence="2">
        <dbReference type="Rhea" id="RHEA:19670"/>
    </physiologicalReaction>
</comment>
<comment type="subunit">
    <text evidence="2">Monomer.</text>
</comment>
<comment type="subcellular location">
    <subcellularLocation>
        <location evidence="2">Cytoplasm</location>
    </subcellularLocation>
</comment>
<comment type="similarity">
    <text evidence="2">Belongs to the TRAFAC class translation factor GTPase superfamily. Classic translation factor GTPase family. EF-Tu/EF-1A subfamily.</text>
</comment>
<keyword id="KW-0963">Cytoplasm</keyword>
<keyword id="KW-0251">Elongation factor</keyword>
<keyword id="KW-0342">GTP-binding</keyword>
<keyword id="KW-0378">Hydrolase</keyword>
<keyword id="KW-0460">Magnesium</keyword>
<keyword id="KW-0479">Metal-binding</keyword>
<keyword id="KW-0547">Nucleotide-binding</keyword>
<keyword id="KW-0648">Protein biosynthesis</keyword>
<keyword id="KW-1185">Reference proteome</keyword>
<accession>Q7N9B1</accession>
<organism>
    <name type="scientific">Photorhabdus laumondii subsp. laumondii (strain DSM 15139 / CIP 105565 / TT01)</name>
    <name type="common">Photorhabdus luminescens subsp. laumondii</name>
    <dbReference type="NCBI Taxonomy" id="243265"/>
    <lineage>
        <taxon>Bacteria</taxon>
        <taxon>Pseudomonadati</taxon>
        <taxon>Pseudomonadota</taxon>
        <taxon>Gammaproteobacteria</taxon>
        <taxon>Enterobacterales</taxon>
        <taxon>Morganellaceae</taxon>
        <taxon>Photorhabdus</taxon>
    </lineage>
</organism>
<gene>
    <name evidence="2" type="primary">tuf1</name>
    <name type="synonym">tufB</name>
    <name type="ordered locus">plu0432</name>
</gene>
<sequence length="394" mass="43174">MSKEKFERKKPHVNVGTIGHVDHGKTTLTAAITTVLAKTFGGNARAFDQIDNAPEEKARGITISTSHVEYDTPSRHYAHVDCPGHADYVKNMITGAAQMDGAILVVAATDGPMPQTREHILLGRQVGVPYIIVFLNKCDMVDDEELLELVEMEVRELLSQYDFPGDDTPVIRGSALKALEGDAEWEAKIIELAEALDSYIPEPERAIDQPFLLPIEDVFSISGRGTVVTGRVERGIVKVGEEVEIVGIKDTTKTTCTGVEMFRKLLDEGRAGENVGVLLRGTKRDEIERGQVLAKPGSIKPHTTFESEVYILSKDEGGRHTPFFKGYRPQFYFRTTDVTGTIELPEGVEMVMPGDNIQMKVTLIAPIAMDQGLRFAIREGGRTVGAGVVAKVIA</sequence>